<gene>
    <name type="primary">Nkx2-4</name>
    <name type="synonym">Nkx2d</name>
</gene>
<sequence>MSLSPKHTTPFSVSDILSPIEETYKKFGGVMDGAPPGLGAPLGAAAYRAPPSGPSSQAAAVAAGMQPPHAMAGHNAAAAAAAAAAAAAAAATYHMPPGVSQFPHSAMGSYCNGGLGNMGELPAYTDGMRGGAAAAATGWYGANTDPRYSSISRFMGPSAGVNVAGMGSLTGIADAAKSLAPLHAAAPRRKRRVLFSQAQVYELERRFKQQKYLSAPEREHLASMIHLTPTQVKIWFQNHRYKMKRQAKDKAAQQLQQEGGLGPPPPPPPPSPRRVAVPVLVKDGKPCQNGAGTPTPGQGGQQPQAPTPAPELEELSPSPPALHGPGGGLAALDAATGDYGGGVLGANLLYGRTW</sequence>
<protein>
    <recommendedName>
        <fullName>Homeobox protein Nkx-2.4</fullName>
    </recommendedName>
    <alternativeName>
        <fullName>Homeobox protein NK-2 homolog D</fullName>
    </alternativeName>
</protein>
<comment type="function">
    <text>Probable transcription factor.</text>
</comment>
<comment type="subcellular location">
    <subcellularLocation>
        <location evidence="1">Nucleus</location>
    </subcellularLocation>
</comment>
<comment type="tissue specificity">
    <text>In the embryo it is detected in the posterior hypothalamus and later in the head. In the adult it is detected only in testis.</text>
</comment>
<comment type="developmental stage">
    <text>Expressed in a restricted region of the posterior hypothalamus from 10 dpc. Detected in the head region from 12.5 dpc to 14.5 dpc. Expression is down-regulated by 15.5 dpc.</text>
</comment>
<comment type="similarity">
    <text evidence="3">Belongs to the NK-2 homeobox family.</text>
</comment>
<organism>
    <name type="scientific">Mus musculus</name>
    <name type="common">Mouse</name>
    <dbReference type="NCBI Taxonomy" id="10090"/>
    <lineage>
        <taxon>Eukaryota</taxon>
        <taxon>Metazoa</taxon>
        <taxon>Chordata</taxon>
        <taxon>Craniata</taxon>
        <taxon>Vertebrata</taxon>
        <taxon>Euteleostomi</taxon>
        <taxon>Mammalia</taxon>
        <taxon>Eutheria</taxon>
        <taxon>Euarchontoglires</taxon>
        <taxon>Glires</taxon>
        <taxon>Rodentia</taxon>
        <taxon>Myomorpha</taxon>
        <taxon>Muroidea</taxon>
        <taxon>Muridae</taxon>
        <taxon>Murinae</taxon>
        <taxon>Mus</taxon>
        <taxon>Mus</taxon>
    </lineage>
</organism>
<dbReference type="EMBL" id="AF202038">
    <property type="protein sequence ID" value="AAG35618.1"/>
    <property type="molecule type" value="Genomic_DNA"/>
</dbReference>
<dbReference type="EMBL" id="AF202039">
    <property type="protein sequence ID" value="AAG35619.1"/>
    <property type="molecule type" value="mRNA"/>
</dbReference>
<dbReference type="EMBL" id="AL928876">
    <property type="status" value="NOT_ANNOTATED_CDS"/>
    <property type="molecule type" value="Genomic_DNA"/>
</dbReference>
<dbReference type="CCDS" id="CCDS16833.1"/>
<dbReference type="RefSeq" id="NP_075993.1">
    <property type="nucleotide sequence ID" value="NM_023504.1"/>
</dbReference>
<dbReference type="SMR" id="Q9EQM3"/>
<dbReference type="FunCoup" id="Q9EQM3">
    <property type="interactions" value="1105"/>
</dbReference>
<dbReference type="STRING" id="10090.ENSMUSP00000066690"/>
<dbReference type="GlyGen" id="Q9EQM3">
    <property type="glycosylation" value="2 sites"/>
</dbReference>
<dbReference type="PhosphoSitePlus" id="Q9EQM3"/>
<dbReference type="PaxDb" id="10090-ENSMUSP00000066690"/>
<dbReference type="ProteomicsDB" id="287429"/>
<dbReference type="Antibodypedia" id="60221">
    <property type="antibodies" value="143 antibodies from 24 providers"/>
</dbReference>
<dbReference type="DNASU" id="228731"/>
<dbReference type="Ensembl" id="ENSMUST00000067020.3">
    <property type="protein sequence ID" value="ENSMUSP00000066690.3"/>
    <property type="gene ID" value="ENSMUSG00000054160.3"/>
</dbReference>
<dbReference type="GeneID" id="228731"/>
<dbReference type="KEGG" id="mmu:228731"/>
<dbReference type="UCSC" id="uc008mss.1">
    <property type="organism name" value="mouse"/>
</dbReference>
<dbReference type="AGR" id="MGI:97349"/>
<dbReference type="CTD" id="644524"/>
<dbReference type="MGI" id="MGI:97349">
    <property type="gene designation" value="Nkx2-4"/>
</dbReference>
<dbReference type="VEuPathDB" id="HostDB:ENSMUSG00000054160"/>
<dbReference type="eggNOG" id="KOG0842">
    <property type="taxonomic scope" value="Eukaryota"/>
</dbReference>
<dbReference type="GeneTree" id="ENSGT00940000162247"/>
<dbReference type="HOGENOM" id="CLU_052416_0_0_1"/>
<dbReference type="InParanoid" id="Q9EQM3"/>
<dbReference type="OMA" id="VSQFPHS"/>
<dbReference type="OrthoDB" id="3137333at2759"/>
<dbReference type="PhylomeDB" id="Q9EQM3"/>
<dbReference type="TreeFam" id="TF351204"/>
<dbReference type="BioGRID-ORCS" id="228731">
    <property type="hits" value="2 hits in 78 CRISPR screens"/>
</dbReference>
<dbReference type="PRO" id="PR:Q9EQM3"/>
<dbReference type="Proteomes" id="UP000000589">
    <property type="component" value="Chromosome 2"/>
</dbReference>
<dbReference type="RNAct" id="Q9EQM3">
    <property type="molecule type" value="protein"/>
</dbReference>
<dbReference type="Bgee" id="ENSMUSG00000054160">
    <property type="expression patterns" value="Expressed in urethra and 62 other cell types or tissues"/>
</dbReference>
<dbReference type="GO" id="GO:0005634">
    <property type="term" value="C:nucleus"/>
    <property type="evidence" value="ECO:0007669"/>
    <property type="project" value="UniProtKB-SubCell"/>
</dbReference>
<dbReference type="GO" id="GO:0003677">
    <property type="term" value="F:DNA binding"/>
    <property type="evidence" value="ECO:0007669"/>
    <property type="project" value="UniProtKB-KW"/>
</dbReference>
<dbReference type="GO" id="GO:0000981">
    <property type="term" value="F:DNA-binding transcription factor activity, RNA polymerase II-specific"/>
    <property type="evidence" value="ECO:0007669"/>
    <property type="project" value="InterPro"/>
</dbReference>
<dbReference type="CDD" id="cd00086">
    <property type="entry name" value="homeodomain"/>
    <property type="match status" value="1"/>
</dbReference>
<dbReference type="FunFam" id="1.10.10.60:FF:000108">
    <property type="entry name" value="NK2 homeobox 1"/>
    <property type="match status" value="1"/>
</dbReference>
<dbReference type="Gene3D" id="1.10.10.60">
    <property type="entry name" value="Homeodomain-like"/>
    <property type="match status" value="1"/>
</dbReference>
<dbReference type="InterPro" id="IPR001356">
    <property type="entry name" value="HD"/>
</dbReference>
<dbReference type="InterPro" id="IPR020479">
    <property type="entry name" value="HD_metazoa"/>
</dbReference>
<dbReference type="InterPro" id="IPR017970">
    <property type="entry name" value="Homeobox_CS"/>
</dbReference>
<dbReference type="InterPro" id="IPR050394">
    <property type="entry name" value="Homeobox_NK-like"/>
</dbReference>
<dbReference type="InterPro" id="IPR009057">
    <property type="entry name" value="Homeodomain-like_sf"/>
</dbReference>
<dbReference type="PANTHER" id="PTHR24340">
    <property type="entry name" value="HOMEOBOX PROTEIN NKX"/>
    <property type="match status" value="1"/>
</dbReference>
<dbReference type="PANTHER" id="PTHR24340:SF40">
    <property type="entry name" value="HOMEOBOX PROTEIN NKX-2.4"/>
    <property type="match status" value="1"/>
</dbReference>
<dbReference type="Pfam" id="PF00046">
    <property type="entry name" value="Homeodomain"/>
    <property type="match status" value="1"/>
</dbReference>
<dbReference type="PRINTS" id="PR00024">
    <property type="entry name" value="HOMEOBOX"/>
</dbReference>
<dbReference type="SMART" id="SM00389">
    <property type="entry name" value="HOX"/>
    <property type="match status" value="1"/>
</dbReference>
<dbReference type="SUPFAM" id="SSF46689">
    <property type="entry name" value="Homeodomain-like"/>
    <property type="match status" value="1"/>
</dbReference>
<dbReference type="PROSITE" id="PS00027">
    <property type="entry name" value="HOMEOBOX_1"/>
    <property type="match status" value="1"/>
</dbReference>
<dbReference type="PROSITE" id="PS50071">
    <property type="entry name" value="HOMEOBOX_2"/>
    <property type="match status" value="1"/>
</dbReference>
<keyword id="KW-0217">Developmental protein</keyword>
<keyword id="KW-0238">DNA-binding</keyword>
<keyword id="KW-0371">Homeobox</keyword>
<keyword id="KW-0539">Nucleus</keyword>
<keyword id="KW-1185">Reference proteome</keyword>
<reference key="1">
    <citation type="journal article" date="2000" name="Mamm. Genome">
        <title>Conserved linkage of NK-2 homeobox gene pairs Nkx2-2/2-4 and Nkx2-1/2-9 in mammals.</title>
        <authorList>
            <person name="Wang C.-C."/>
            <person name="Brodnicki T."/>
            <person name="Copeland N.G."/>
            <person name="Jenkins N.A."/>
            <person name="Harvey R.P."/>
        </authorList>
    </citation>
    <scope>NUCLEOTIDE SEQUENCE [GENOMIC DNA / MRNA]</scope>
    <source>
        <strain>129/Sv</strain>
        <strain>C57BL/6J</strain>
    </source>
</reference>
<reference key="2">
    <citation type="journal article" date="1992" name="Neuron">
        <title>Regional expression of the homeobox gene Nkx-2.2 in the developing mammalian forebrain.</title>
        <authorList>
            <person name="Price M."/>
            <person name="Lazzaro D."/>
            <person name="Pohl T."/>
            <person name="Mattei M.-G."/>
            <person name="Ruether U."/>
            <person name="Olivo J.-C."/>
            <person name="Duboule D."/>
            <person name="di Lauro R."/>
        </authorList>
    </citation>
    <scope>PARTIAL NUCLEOTIDE SEQUENCE</scope>
    <source>
        <strain>C57BL/6J</strain>
    </source>
</reference>
<reference key="3">
    <citation type="journal article" date="2009" name="PLoS Biol.">
        <title>Lineage-specific biology revealed by a finished genome assembly of the mouse.</title>
        <authorList>
            <person name="Church D.M."/>
            <person name="Goodstadt L."/>
            <person name="Hillier L.W."/>
            <person name="Zody M.C."/>
            <person name="Goldstein S."/>
            <person name="She X."/>
            <person name="Bult C.J."/>
            <person name="Agarwala R."/>
            <person name="Cherry J.L."/>
            <person name="DiCuccio M."/>
            <person name="Hlavina W."/>
            <person name="Kapustin Y."/>
            <person name="Meric P."/>
            <person name="Maglott D."/>
            <person name="Birtle Z."/>
            <person name="Marques A.C."/>
            <person name="Graves T."/>
            <person name="Zhou S."/>
            <person name="Teague B."/>
            <person name="Potamousis K."/>
            <person name="Churas C."/>
            <person name="Place M."/>
            <person name="Herschleb J."/>
            <person name="Runnheim R."/>
            <person name="Forrest D."/>
            <person name="Amos-Landgraf J."/>
            <person name="Schwartz D.C."/>
            <person name="Cheng Z."/>
            <person name="Lindblad-Toh K."/>
            <person name="Eichler E.E."/>
            <person name="Ponting C.P."/>
        </authorList>
    </citation>
    <scope>NUCLEOTIDE SEQUENCE [LARGE SCALE GENOMIC DNA]</scope>
    <source>
        <strain>C57BL/6J</strain>
    </source>
</reference>
<accession>Q9EQM3</accession>
<accession>A2ATK2</accession>
<accession>Q9EQM4</accession>
<proteinExistence type="evidence at transcript level"/>
<feature type="chain" id="PRO_0000048936" description="Homeobox protein Nkx-2.4">
    <location>
        <begin position="1"/>
        <end position="354"/>
    </location>
</feature>
<feature type="DNA-binding region" description="Homeobox" evidence="1">
    <location>
        <begin position="188"/>
        <end position="247"/>
    </location>
</feature>
<feature type="region of interest" description="Disordered" evidence="2">
    <location>
        <begin position="245"/>
        <end position="329"/>
    </location>
</feature>
<feature type="compositionally biased region" description="Pro residues" evidence="2">
    <location>
        <begin position="262"/>
        <end position="272"/>
    </location>
</feature>
<feature type="compositionally biased region" description="Low complexity" evidence="2">
    <location>
        <begin position="290"/>
        <end position="304"/>
    </location>
</feature>
<evidence type="ECO:0000255" key="1">
    <source>
        <dbReference type="PROSITE-ProRule" id="PRU00108"/>
    </source>
</evidence>
<evidence type="ECO:0000256" key="2">
    <source>
        <dbReference type="SAM" id="MobiDB-lite"/>
    </source>
</evidence>
<evidence type="ECO:0000305" key="3"/>
<name>NKX24_MOUSE</name>